<name>FTSK_BACCR</name>
<sequence>MAKQKQRGTKAKARRTIKPTLYYEIVGLTLFALSIITILQLGVVGKSFVLFFRFFFGEWYIIGVLGVIALSVSFVIKRGWPNLLNKRLIGFYLIVLAILMFSHITLFNLLTKDGAVQNTSVIVSTKDNFFLEMKKGPDSVHLGGGMFGALMFATCYFLFDEVGAYIIGIILVILGILCITNKHIGEVLAPVGRILRSQFQVMQGDYKDWRAKRTAEQTEKKKTTRSTRSKRAAEQEEIIEPMEEISIDPPIISNFTENYPVNEEEDKRIEVEQEELITSPFIEETPPIEEPKKKRGEKIVESLESEAQAPPMQFSNVENKDYKLPSLDILKFPKNKQVTNENAEIYENARKLERTFQSFGVKAKVTKVHRGPAVTKYEVYPDMGVKVSKIVSLSDDLALALAAKDIRIEAPIPGKSAVGIEVPNSEVSMVTLREVLDSKANNHPEEKLLIGLGRDITGEAVLARLNKMPHLLVAGATGSGKSVCINGIIVSILMRAKPHEVKLMMIDPKMVELNVYNGVPHLLTPVVTDPKKASQALKKVVSEMERRYELFAHSGTRNIEGYNDYIKEHNSQSEAKQPELPYIVVIVDELADLMMVASSDVEDAIMRLAQMARAAGIHLIIATQRPSVDVITGVIKANIPSRIAFAVSSQTDSRTILDGGGAEKLLGRGDMLFIPIGASKPVRVQGAFLSDDEVERVVEYVIGQQKAQYQEDMIPQDVLDTKQEVEDELYDEAVQLVVEMQTASVSMLQRRFRVGYTRAARLIDAMEMNGVVGPYEGSKPREVLINDVQEKSS</sequence>
<proteinExistence type="inferred from homology"/>
<dbReference type="EMBL" id="AE016877">
    <property type="protein sequence ID" value="AAP10716.1"/>
    <property type="molecule type" value="Genomic_DNA"/>
</dbReference>
<dbReference type="RefSeq" id="NP_833515.1">
    <property type="nucleotide sequence ID" value="NC_004722.1"/>
</dbReference>
<dbReference type="RefSeq" id="WP_001118781.1">
    <property type="nucleotide sequence ID" value="NC_004722.1"/>
</dbReference>
<dbReference type="SMR" id="Q81A03"/>
<dbReference type="STRING" id="226900.BC_3793"/>
<dbReference type="KEGG" id="bce:BC3793"/>
<dbReference type="PATRIC" id="fig|226900.8.peg.3910"/>
<dbReference type="HOGENOM" id="CLU_001981_9_6_9"/>
<dbReference type="Proteomes" id="UP000001417">
    <property type="component" value="Chromosome"/>
</dbReference>
<dbReference type="GO" id="GO:0005886">
    <property type="term" value="C:plasma membrane"/>
    <property type="evidence" value="ECO:0007669"/>
    <property type="project" value="UniProtKB-SubCell"/>
</dbReference>
<dbReference type="GO" id="GO:0005524">
    <property type="term" value="F:ATP binding"/>
    <property type="evidence" value="ECO:0007669"/>
    <property type="project" value="UniProtKB-KW"/>
</dbReference>
<dbReference type="GO" id="GO:0016887">
    <property type="term" value="F:ATP hydrolysis activity"/>
    <property type="evidence" value="ECO:0007669"/>
    <property type="project" value="InterPro"/>
</dbReference>
<dbReference type="GO" id="GO:0003677">
    <property type="term" value="F:DNA binding"/>
    <property type="evidence" value="ECO:0007669"/>
    <property type="project" value="UniProtKB-KW"/>
</dbReference>
<dbReference type="GO" id="GO:0015616">
    <property type="term" value="F:DNA translocase activity"/>
    <property type="evidence" value="ECO:0000318"/>
    <property type="project" value="GO_Central"/>
</dbReference>
<dbReference type="GO" id="GO:0051301">
    <property type="term" value="P:cell division"/>
    <property type="evidence" value="ECO:0007669"/>
    <property type="project" value="UniProtKB-KW"/>
</dbReference>
<dbReference type="GO" id="GO:0007059">
    <property type="term" value="P:chromosome segregation"/>
    <property type="evidence" value="ECO:0007669"/>
    <property type="project" value="UniProtKB-KW"/>
</dbReference>
<dbReference type="CDD" id="cd01127">
    <property type="entry name" value="TrwB_TraG_TraD_VirD4"/>
    <property type="match status" value="1"/>
</dbReference>
<dbReference type="FunFam" id="3.30.980.40:FF:000001">
    <property type="entry name" value="DNA translocase FtsK"/>
    <property type="match status" value="1"/>
</dbReference>
<dbReference type="Gene3D" id="3.30.980.40">
    <property type="match status" value="1"/>
</dbReference>
<dbReference type="Gene3D" id="3.40.50.300">
    <property type="entry name" value="P-loop containing nucleotide triphosphate hydrolases"/>
    <property type="match status" value="1"/>
</dbReference>
<dbReference type="Gene3D" id="1.10.10.10">
    <property type="entry name" value="Winged helix-like DNA-binding domain superfamily/Winged helix DNA-binding domain"/>
    <property type="match status" value="1"/>
</dbReference>
<dbReference type="InterPro" id="IPR003593">
    <property type="entry name" value="AAA+_ATPase"/>
</dbReference>
<dbReference type="InterPro" id="IPR050206">
    <property type="entry name" value="FtsK/SpoIIIE/SftA"/>
</dbReference>
<dbReference type="InterPro" id="IPR041027">
    <property type="entry name" value="FtsK_alpha"/>
</dbReference>
<dbReference type="InterPro" id="IPR002543">
    <property type="entry name" value="FtsK_dom"/>
</dbReference>
<dbReference type="InterPro" id="IPR018541">
    <property type="entry name" value="Ftsk_gamma"/>
</dbReference>
<dbReference type="InterPro" id="IPR027417">
    <property type="entry name" value="P-loop_NTPase"/>
</dbReference>
<dbReference type="InterPro" id="IPR036388">
    <property type="entry name" value="WH-like_DNA-bd_sf"/>
</dbReference>
<dbReference type="InterPro" id="IPR036390">
    <property type="entry name" value="WH_DNA-bd_sf"/>
</dbReference>
<dbReference type="PANTHER" id="PTHR22683:SF41">
    <property type="entry name" value="DNA TRANSLOCASE FTSK"/>
    <property type="match status" value="1"/>
</dbReference>
<dbReference type="PANTHER" id="PTHR22683">
    <property type="entry name" value="SPORULATION PROTEIN RELATED"/>
    <property type="match status" value="1"/>
</dbReference>
<dbReference type="Pfam" id="PF17854">
    <property type="entry name" value="FtsK_alpha"/>
    <property type="match status" value="1"/>
</dbReference>
<dbReference type="Pfam" id="PF09397">
    <property type="entry name" value="FtsK_gamma"/>
    <property type="match status" value="1"/>
</dbReference>
<dbReference type="Pfam" id="PF01580">
    <property type="entry name" value="FtsK_SpoIIIE"/>
    <property type="match status" value="1"/>
</dbReference>
<dbReference type="SMART" id="SM00382">
    <property type="entry name" value="AAA"/>
    <property type="match status" value="1"/>
</dbReference>
<dbReference type="SMART" id="SM00843">
    <property type="entry name" value="Ftsk_gamma"/>
    <property type="match status" value="1"/>
</dbReference>
<dbReference type="SUPFAM" id="SSF52540">
    <property type="entry name" value="P-loop containing nucleoside triphosphate hydrolases"/>
    <property type="match status" value="1"/>
</dbReference>
<dbReference type="SUPFAM" id="SSF46785">
    <property type="entry name" value="Winged helix' DNA-binding domain"/>
    <property type="match status" value="1"/>
</dbReference>
<dbReference type="PROSITE" id="PS50901">
    <property type="entry name" value="FTSK"/>
    <property type="match status" value="1"/>
</dbReference>
<accession>Q81A03</accession>
<comment type="function">
    <text evidence="1">Essential cell division protein that coordinates cell division and chromosome segregation. The N-terminus is involved in assembly of the cell-division machinery. The C-terminus functions as a DNA motor that moves dsDNA in an ATP-dependent manner towards the dif recombination site, which is located within the replication terminus region. Required for activation of the Xer recombinase, allowing activation of chromosome unlinking by recombination (By similarity).</text>
</comment>
<comment type="subunit">
    <text evidence="1">Homohexamer. Forms a ring that surrounds DNA (By similarity).</text>
</comment>
<comment type="subcellular location">
    <subcellularLocation>
        <location evidence="1">Cell membrane</location>
        <topology evidence="1">Multi-pass membrane protein</topology>
    </subcellularLocation>
    <text evidence="1">Located at the septum.</text>
</comment>
<comment type="domain">
    <text evidence="1">Consists of an N-terminal domain, which is sufficient for the localization to the septal ring and is required for cell division, followed by a linker domain, and a C-terminal domain, which forms the translocation motor involved in chromosome segregation. The C-terminal domain can be further subdivided into alpha, beta and gamma subdomains. The alpha and beta subdomains form the DNA pump, and the gamma subdomain is a regulatory subdomain (By similarity).</text>
</comment>
<comment type="similarity">
    <text evidence="5">Belongs to the FtsK/SpoIIIE/SftA family.</text>
</comment>
<keyword id="KW-0067">ATP-binding</keyword>
<keyword id="KW-0131">Cell cycle</keyword>
<keyword id="KW-0132">Cell division</keyword>
<keyword id="KW-1003">Cell membrane</keyword>
<keyword id="KW-0159">Chromosome partition</keyword>
<keyword id="KW-0238">DNA-binding</keyword>
<keyword id="KW-0472">Membrane</keyword>
<keyword id="KW-0547">Nucleotide-binding</keyword>
<keyword id="KW-1185">Reference proteome</keyword>
<keyword id="KW-0812">Transmembrane</keyword>
<keyword id="KW-1133">Transmembrane helix</keyword>
<evidence type="ECO:0000250" key="1"/>
<evidence type="ECO:0000255" key="2"/>
<evidence type="ECO:0000255" key="3">
    <source>
        <dbReference type="PROSITE-ProRule" id="PRU00289"/>
    </source>
</evidence>
<evidence type="ECO:0000256" key="4">
    <source>
        <dbReference type="SAM" id="MobiDB-lite"/>
    </source>
</evidence>
<evidence type="ECO:0000305" key="5"/>
<organism>
    <name type="scientific">Bacillus cereus (strain ATCC 14579 / DSM 31 / CCUG 7414 / JCM 2152 / NBRC 15305 / NCIMB 9373 / NCTC 2599 / NRRL B-3711)</name>
    <dbReference type="NCBI Taxonomy" id="226900"/>
    <lineage>
        <taxon>Bacteria</taxon>
        <taxon>Bacillati</taxon>
        <taxon>Bacillota</taxon>
        <taxon>Bacilli</taxon>
        <taxon>Bacillales</taxon>
        <taxon>Bacillaceae</taxon>
        <taxon>Bacillus</taxon>
        <taxon>Bacillus cereus group</taxon>
    </lineage>
</organism>
<protein>
    <recommendedName>
        <fullName>DNA translocase FtsK</fullName>
    </recommendedName>
</protein>
<reference key="1">
    <citation type="journal article" date="2003" name="Nature">
        <title>Genome sequence of Bacillus cereus and comparative analysis with Bacillus anthracis.</title>
        <authorList>
            <person name="Ivanova N."/>
            <person name="Sorokin A."/>
            <person name="Anderson I."/>
            <person name="Galleron N."/>
            <person name="Candelon B."/>
            <person name="Kapatral V."/>
            <person name="Bhattacharyya A."/>
            <person name="Reznik G."/>
            <person name="Mikhailova N."/>
            <person name="Lapidus A."/>
            <person name="Chu L."/>
            <person name="Mazur M."/>
            <person name="Goltsman E."/>
            <person name="Larsen N."/>
            <person name="D'Souza M."/>
            <person name="Walunas T."/>
            <person name="Grechkin Y."/>
            <person name="Pusch G."/>
            <person name="Haselkorn R."/>
            <person name="Fonstein M."/>
            <person name="Ehrlich S.D."/>
            <person name="Overbeek R."/>
            <person name="Kyrpides N.C."/>
        </authorList>
    </citation>
    <scope>NUCLEOTIDE SEQUENCE [LARGE SCALE GENOMIC DNA]</scope>
    <source>
        <strain>ATCC 14579 / DSM 31 / CCUG 7414 / JCM 2152 / NBRC 15305 / NCIMB 9373 / NCTC 2599 / NRRL B-3711</strain>
    </source>
</reference>
<feature type="chain" id="PRO_0000098237" description="DNA translocase FtsK">
    <location>
        <begin position="1"/>
        <end position="793"/>
    </location>
</feature>
<feature type="transmembrane region" description="Helical" evidence="2">
    <location>
        <begin position="25"/>
        <end position="45"/>
    </location>
</feature>
<feature type="transmembrane region" description="Helical" evidence="2">
    <location>
        <begin position="56"/>
        <end position="76"/>
    </location>
</feature>
<feature type="transmembrane region" description="Helical" evidence="2">
    <location>
        <begin position="88"/>
        <end position="108"/>
    </location>
</feature>
<feature type="transmembrane region" description="Helical" evidence="2">
    <location>
        <begin position="136"/>
        <end position="156"/>
    </location>
</feature>
<feature type="transmembrane region" description="Helical" evidence="2">
    <location>
        <begin position="157"/>
        <end position="177"/>
    </location>
</feature>
<feature type="topological domain" description="Cytoplasmic" evidence="2">
    <location>
        <begin position="178"/>
        <end position="793"/>
    </location>
</feature>
<feature type="domain" description="FtsK" evidence="3">
    <location>
        <begin position="458"/>
        <end position="654"/>
    </location>
</feature>
<feature type="region of interest" description="Disordered" evidence="4">
    <location>
        <begin position="212"/>
        <end position="235"/>
    </location>
</feature>
<feature type="compositionally biased region" description="Basic and acidic residues" evidence="4">
    <location>
        <begin position="212"/>
        <end position="221"/>
    </location>
</feature>
<feature type="binding site" evidence="3">
    <location>
        <begin position="478"/>
        <end position="483"/>
    </location>
    <ligand>
        <name>ATP</name>
        <dbReference type="ChEBI" id="CHEBI:30616"/>
    </ligand>
</feature>
<gene>
    <name type="primary">ftsK</name>
    <name type="ordered locus">BC_3793</name>
</gene>